<comment type="function">
    <text evidence="2">Catalyzes the formation of N(7)-methylguanine at position 46 (m7G46) in tRNA.</text>
</comment>
<comment type="catalytic activity">
    <reaction evidence="2">
        <text>guanosine(46) in tRNA + S-adenosyl-L-methionine = N(7)-methylguanosine(46) in tRNA + S-adenosyl-L-homocysteine</text>
        <dbReference type="Rhea" id="RHEA:42708"/>
        <dbReference type="Rhea" id="RHEA-COMP:10188"/>
        <dbReference type="Rhea" id="RHEA-COMP:10189"/>
        <dbReference type="ChEBI" id="CHEBI:57856"/>
        <dbReference type="ChEBI" id="CHEBI:59789"/>
        <dbReference type="ChEBI" id="CHEBI:74269"/>
        <dbReference type="ChEBI" id="CHEBI:74480"/>
        <dbReference type="EC" id="2.1.1.33"/>
    </reaction>
</comment>
<comment type="pathway">
    <text evidence="2">tRNA modification; N(7)-methylguanine-tRNA biosynthesis.</text>
</comment>
<comment type="similarity">
    <text evidence="2">Belongs to the class I-like SAM-binding methyltransferase superfamily. TrmB family.</text>
</comment>
<gene>
    <name evidence="2" type="primary">trmB</name>
    <name type="ordered locus">SP70585_0611</name>
</gene>
<name>TRMB_STRP7</name>
<evidence type="ECO:0000250" key="1"/>
<evidence type="ECO:0000255" key="2">
    <source>
        <dbReference type="HAMAP-Rule" id="MF_01057"/>
    </source>
</evidence>
<accession>C1C5S3</accession>
<sequence>MRVRNRKGATELLEANPQYVVLNPLEAKAKWRDLFGNDNPIHVEVGSGKGAFVSGMAKQNPDINYIGIDIQKSVLSYALDKVLEAGVSNIKLLWVDGSDLTDYFEDGEIDRLYLNFSDPWPKKRHEKRRLTYKTFLDTFKRILPENGEIHFKTDNRGLFEYSLVSFSQYGMKLNGVWLDLHASDFEGNVMTEYEQKFSNKGQVIYRVEAEF</sequence>
<protein>
    <recommendedName>
        <fullName evidence="2">tRNA (guanine-N(7)-)-methyltransferase</fullName>
        <ecNumber evidence="2">2.1.1.33</ecNumber>
    </recommendedName>
    <alternativeName>
        <fullName evidence="2">tRNA (guanine(46)-N(7))-methyltransferase</fullName>
    </alternativeName>
    <alternativeName>
        <fullName evidence="2">tRNA(m7G46)-methyltransferase</fullName>
    </alternativeName>
</protein>
<reference key="1">
    <citation type="journal article" date="2010" name="Genome Biol.">
        <title>Structure and dynamics of the pan-genome of Streptococcus pneumoniae and closely related species.</title>
        <authorList>
            <person name="Donati C."/>
            <person name="Hiller N.L."/>
            <person name="Tettelin H."/>
            <person name="Muzzi A."/>
            <person name="Croucher N.J."/>
            <person name="Angiuoli S.V."/>
            <person name="Oggioni M."/>
            <person name="Dunning Hotopp J.C."/>
            <person name="Hu F.Z."/>
            <person name="Riley D.R."/>
            <person name="Covacci A."/>
            <person name="Mitchell T.J."/>
            <person name="Bentley S.D."/>
            <person name="Kilian M."/>
            <person name="Ehrlich G.D."/>
            <person name="Rappuoli R."/>
            <person name="Moxon E.R."/>
            <person name="Masignani V."/>
        </authorList>
    </citation>
    <scope>NUCLEOTIDE SEQUENCE [LARGE SCALE GENOMIC DNA]</scope>
    <source>
        <strain>70585</strain>
    </source>
</reference>
<organism>
    <name type="scientific">Streptococcus pneumoniae (strain 70585)</name>
    <dbReference type="NCBI Taxonomy" id="488221"/>
    <lineage>
        <taxon>Bacteria</taxon>
        <taxon>Bacillati</taxon>
        <taxon>Bacillota</taxon>
        <taxon>Bacilli</taxon>
        <taxon>Lactobacillales</taxon>
        <taxon>Streptococcaceae</taxon>
        <taxon>Streptococcus</taxon>
    </lineage>
</organism>
<feature type="chain" id="PRO_1000149665" description="tRNA (guanine-N(7)-)-methyltransferase">
    <location>
        <begin position="1"/>
        <end position="211"/>
    </location>
</feature>
<feature type="region of interest" description="Interaction with RNA" evidence="2">
    <location>
        <begin position="124"/>
        <end position="129"/>
    </location>
</feature>
<feature type="active site" evidence="1">
    <location>
        <position position="118"/>
    </location>
</feature>
<feature type="binding site" evidence="2">
    <location>
        <position position="44"/>
    </location>
    <ligand>
        <name>S-adenosyl-L-methionine</name>
        <dbReference type="ChEBI" id="CHEBI:59789"/>
    </ligand>
</feature>
<feature type="binding site" evidence="2">
    <location>
        <position position="69"/>
    </location>
    <ligand>
        <name>S-adenosyl-L-methionine</name>
        <dbReference type="ChEBI" id="CHEBI:59789"/>
    </ligand>
</feature>
<feature type="binding site" evidence="2">
    <location>
        <position position="96"/>
    </location>
    <ligand>
        <name>S-adenosyl-L-methionine</name>
        <dbReference type="ChEBI" id="CHEBI:59789"/>
    </ligand>
</feature>
<feature type="binding site" evidence="2">
    <location>
        <position position="118"/>
    </location>
    <ligand>
        <name>S-adenosyl-L-methionine</name>
        <dbReference type="ChEBI" id="CHEBI:59789"/>
    </ligand>
</feature>
<feature type="binding site" evidence="2">
    <location>
        <position position="122"/>
    </location>
    <ligand>
        <name>substrate</name>
    </ligand>
</feature>
<feature type="binding site" evidence="2">
    <location>
        <position position="154"/>
    </location>
    <ligand>
        <name>substrate</name>
    </ligand>
</feature>
<feature type="binding site" evidence="2">
    <location>
        <begin position="191"/>
        <end position="194"/>
    </location>
    <ligand>
        <name>substrate</name>
    </ligand>
</feature>
<proteinExistence type="inferred from homology"/>
<dbReference type="EC" id="2.1.1.33" evidence="2"/>
<dbReference type="EMBL" id="CP000918">
    <property type="protein sequence ID" value="ACO16848.1"/>
    <property type="molecule type" value="Genomic_DNA"/>
</dbReference>
<dbReference type="RefSeq" id="WP_001266078.1">
    <property type="nucleotide sequence ID" value="NC_012468.1"/>
</dbReference>
<dbReference type="SMR" id="C1C5S3"/>
<dbReference type="KEGG" id="snm:SP70585_0611"/>
<dbReference type="HOGENOM" id="CLU_050910_2_1_9"/>
<dbReference type="UniPathway" id="UPA00989"/>
<dbReference type="Proteomes" id="UP000002211">
    <property type="component" value="Chromosome"/>
</dbReference>
<dbReference type="GO" id="GO:0043527">
    <property type="term" value="C:tRNA methyltransferase complex"/>
    <property type="evidence" value="ECO:0007669"/>
    <property type="project" value="TreeGrafter"/>
</dbReference>
<dbReference type="GO" id="GO:0008176">
    <property type="term" value="F:tRNA (guanine(46)-N7)-methyltransferase activity"/>
    <property type="evidence" value="ECO:0007669"/>
    <property type="project" value="UniProtKB-UniRule"/>
</dbReference>
<dbReference type="CDD" id="cd02440">
    <property type="entry name" value="AdoMet_MTases"/>
    <property type="match status" value="1"/>
</dbReference>
<dbReference type="FunFam" id="3.40.50.150:FF:000035">
    <property type="entry name" value="tRNA (guanine-N(7)-)-methyltransferase"/>
    <property type="match status" value="1"/>
</dbReference>
<dbReference type="Gene3D" id="3.40.50.150">
    <property type="entry name" value="Vaccinia Virus protein VP39"/>
    <property type="match status" value="1"/>
</dbReference>
<dbReference type="HAMAP" id="MF_01057">
    <property type="entry name" value="tRNA_methyltr_TrmB"/>
    <property type="match status" value="1"/>
</dbReference>
<dbReference type="InterPro" id="IPR029063">
    <property type="entry name" value="SAM-dependent_MTases_sf"/>
</dbReference>
<dbReference type="InterPro" id="IPR003358">
    <property type="entry name" value="tRNA_(Gua-N-7)_MeTrfase_Trmb"/>
</dbReference>
<dbReference type="InterPro" id="IPR055361">
    <property type="entry name" value="tRNA_methyltr_TrmB_bact"/>
</dbReference>
<dbReference type="NCBIfam" id="NF001080">
    <property type="entry name" value="PRK00121.2-2"/>
    <property type="match status" value="1"/>
</dbReference>
<dbReference type="NCBIfam" id="TIGR00091">
    <property type="entry name" value="tRNA (guanosine(46)-N7)-methyltransferase TrmB"/>
    <property type="match status" value="1"/>
</dbReference>
<dbReference type="PANTHER" id="PTHR23417">
    <property type="entry name" value="3-DEOXY-D-MANNO-OCTULOSONIC-ACID TRANSFERASE/TRNA GUANINE-N 7 - -METHYLTRANSFERASE"/>
    <property type="match status" value="1"/>
</dbReference>
<dbReference type="PANTHER" id="PTHR23417:SF14">
    <property type="entry name" value="PENTACOTRIPEPTIDE-REPEAT REGION OF PRORP DOMAIN-CONTAINING PROTEIN"/>
    <property type="match status" value="1"/>
</dbReference>
<dbReference type="Pfam" id="PF02390">
    <property type="entry name" value="Methyltransf_4"/>
    <property type="match status" value="1"/>
</dbReference>
<dbReference type="SUPFAM" id="SSF53335">
    <property type="entry name" value="S-adenosyl-L-methionine-dependent methyltransferases"/>
    <property type="match status" value="1"/>
</dbReference>
<dbReference type="PROSITE" id="PS51625">
    <property type="entry name" value="SAM_MT_TRMB"/>
    <property type="match status" value="1"/>
</dbReference>
<keyword id="KW-0489">Methyltransferase</keyword>
<keyword id="KW-0949">S-adenosyl-L-methionine</keyword>
<keyword id="KW-0808">Transferase</keyword>
<keyword id="KW-0819">tRNA processing</keyword>